<name>CAN1_PIG</name>
<sequence length="714" mass="81739">MAEEVITPVYCTGVSAQVQKLRAKELGLGRHENAIKYLGQDYEQLRAHCLQSGSLFRDEAFPPVPQSLGFKELGPNSSKTYGVKWKRPTELFSNPQFIVDGATRTDICQGALGDCWLLAAIASLTLNDTLLHRVVPHGQSFQNGYAGIFHFQLWQFGEWVDVVVDDLLPTKDGKLVFVHSAQGNEFWSALLEKAYAKVNGSYEALSGGSTSEGFEDFTGGVTEWYELRKAPSDLYSIILKALERGSLLGCSIDISSVLDMEAVTFKKLVKGHAYSVTGAKQVNYQGQMVNLIRMRNPWGEVEWTGAWSDGSSEWNGVDPYQRDQLRVRMEDGEFWMSFRDFLREFTRLEICNLTPDALKSQRVRNWNTTLYEGTWRRGSTAGGCRNYPATFWVNPQFKIRLEETDDPEDDYGGRESGCSFVLALMQKHRRRERRFGRDMETIGFAVYEVPPELVGQPVHLKRDFFLANASRARSEQFINLREVSTRFRLPPGEYVVVPSTFEPNKEGDFVLRFFSEKKAGTQELDDQVQAILPDEQVLSEEEIDENFKALFRQLAGEDMEISVRELRTILNRIISKHKDLRTKGFSLESCRSMVNLMDRDGNGKLGLVEFNILWNRIRNYLSIFRKFDLDKSGSMSAYEMRMAIESAGFKLNKKLFELIITRYSEPDLAVDFDNFVCCLVRLETMFRFFKTLDTDLDGVVTFDLFKWLQLTMFA</sequence>
<organism>
    <name type="scientific">Sus scrofa</name>
    <name type="common">Pig</name>
    <dbReference type="NCBI Taxonomy" id="9823"/>
    <lineage>
        <taxon>Eukaryota</taxon>
        <taxon>Metazoa</taxon>
        <taxon>Chordata</taxon>
        <taxon>Craniata</taxon>
        <taxon>Vertebrata</taxon>
        <taxon>Euteleostomi</taxon>
        <taxon>Mammalia</taxon>
        <taxon>Eutheria</taxon>
        <taxon>Laurasiatheria</taxon>
        <taxon>Artiodactyla</taxon>
        <taxon>Suina</taxon>
        <taxon>Suidae</taxon>
        <taxon>Sus</taxon>
    </lineage>
</organism>
<protein>
    <recommendedName>
        <fullName evidence="6">Calpain-1 catalytic subunit</fullName>
        <ecNumber evidence="2">3.4.22.52</ecNumber>
    </recommendedName>
    <alternativeName>
        <fullName evidence="2">Calcium-activated neutral proteinase 1</fullName>
        <shortName evidence="2">CANP 1</shortName>
    </alternativeName>
    <alternativeName>
        <fullName evidence="2">Calpain mu-type</fullName>
    </alternativeName>
    <alternativeName>
        <fullName evidence="2">Calpain-1 large subunit</fullName>
    </alternativeName>
    <alternativeName>
        <fullName evidence="2">Micromolar-calpain</fullName>
        <shortName evidence="2">muCANP</shortName>
    </alternativeName>
</protein>
<evidence type="ECO:0000250" key="1"/>
<evidence type="ECO:0000250" key="2">
    <source>
        <dbReference type="UniProtKB" id="P07384"/>
    </source>
</evidence>
<evidence type="ECO:0000250" key="3">
    <source>
        <dbReference type="UniProtKB" id="P97571"/>
    </source>
</evidence>
<evidence type="ECO:0000255" key="4">
    <source>
        <dbReference type="PROSITE-ProRule" id="PRU00239"/>
    </source>
</evidence>
<evidence type="ECO:0000255" key="5">
    <source>
        <dbReference type="PROSITE-ProRule" id="PRU00448"/>
    </source>
</evidence>
<evidence type="ECO:0000305" key="6"/>
<feature type="chain" id="PRO_0000207697" description="Calpain-1 catalytic subunit">
    <location>
        <begin position="1"/>
        <end position="714"/>
    </location>
</feature>
<feature type="domain" description="Calpain catalytic" evidence="4">
    <location>
        <begin position="55"/>
        <end position="354"/>
    </location>
</feature>
<feature type="domain" description="EF-hand 1" evidence="5">
    <location>
        <begin position="585"/>
        <end position="618"/>
    </location>
</feature>
<feature type="domain" description="EF-hand 2" evidence="5">
    <location>
        <begin position="615"/>
        <end position="650"/>
    </location>
</feature>
<feature type="domain" description="EF-hand 3" evidence="5">
    <location>
        <begin position="680"/>
        <end position="714"/>
    </location>
</feature>
<feature type="region of interest" description="Domain III">
    <location>
        <begin position="355"/>
        <end position="526"/>
    </location>
</feature>
<feature type="region of interest" description="Linker">
    <location>
        <begin position="527"/>
        <end position="542"/>
    </location>
</feature>
<feature type="region of interest" description="Domain IV">
    <location>
        <begin position="543"/>
        <end position="713"/>
    </location>
</feature>
<feature type="active site" evidence="1">
    <location>
        <position position="115"/>
    </location>
</feature>
<feature type="active site" evidence="1">
    <location>
        <position position="272"/>
    </location>
</feature>
<feature type="active site" evidence="1">
    <location>
        <position position="296"/>
    </location>
</feature>
<feature type="binding site" evidence="6">
    <location>
        <position position="109"/>
    </location>
    <ligand>
        <name>Ca(2+)</name>
        <dbReference type="ChEBI" id="CHEBI:29108"/>
        <label>1</label>
    </ligand>
</feature>
<feature type="binding site" evidence="6">
    <location>
        <position position="114"/>
    </location>
    <ligand>
        <name>Ca(2+)</name>
        <dbReference type="ChEBI" id="CHEBI:29108"/>
        <label>1</label>
    </ligand>
</feature>
<feature type="binding site" evidence="6">
    <location>
        <position position="318"/>
    </location>
    <ligand>
        <name>Ca(2+)</name>
        <dbReference type="ChEBI" id="CHEBI:29108"/>
        <label>2</label>
    </ligand>
</feature>
<feature type="binding site" evidence="6">
    <location>
        <position position="323"/>
    </location>
    <ligand>
        <name>Ca(2+)</name>
        <dbReference type="ChEBI" id="CHEBI:29108"/>
        <label>2</label>
    </ligand>
</feature>
<feature type="binding site" evidence="5">
    <location>
        <position position="598"/>
    </location>
    <ligand>
        <name>Ca(2+)</name>
        <dbReference type="ChEBI" id="CHEBI:29108"/>
        <label>3</label>
    </ligand>
</feature>
<feature type="binding site" evidence="5">
    <location>
        <position position="600"/>
    </location>
    <ligand>
        <name>Ca(2+)</name>
        <dbReference type="ChEBI" id="CHEBI:29108"/>
        <label>3</label>
    </ligand>
</feature>
<feature type="binding site" evidence="5">
    <location>
        <position position="602"/>
    </location>
    <ligand>
        <name>Ca(2+)</name>
        <dbReference type="ChEBI" id="CHEBI:29108"/>
        <label>3</label>
    </ligand>
</feature>
<feature type="binding site" evidence="5">
    <location>
        <position position="604"/>
    </location>
    <ligand>
        <name>Ca(2+)</name>
        <dbReference type="ChEBI" id="CHEBI:29108"/>
        <label>3</label>
    </ligand>
</feature>
<feature type="binding site" evidence="5">
    <location>
        <position position="609"/>
    </location>
    <ligand>
        <name>Ca(2+)</name>
        <dbReference type="ChEBI" id="CHEBI:29108"/>
        <label>3</label>
    </ligand>
</feature>
<feature type="binding site" evidence="5">
    <location>
        <position position="628"/>
    </location>
    <ligand>
        <name>Ca(2+)</name>
        <dbReference type="ChEBI" id="CHEBI:29108"/>
        <label>4</label>
    </ligand>
</feature>
<feature type="binding site" evidence="5">
    <location>
        <position position="630"/>
    </location>
    <ligand>
        <name>Ca(2+)</name>
        <dbReference type="ChEBI" id="CHEBI:29108"/>
        <label>4</label>
    </ligand>
</feature>
<feature type="binding site" evidence="5">
    <location>
        <position position="632"/>
    </location>
    <ligand>
        <name>Ca(2+)</name>
        <dbReference type="ChEBI" id="CHEBI:29108"/>
        <label>4</label>
    </ligand>
</feature>
<feature type="binding site" evidence="5">
    <location>
        <position position="634"/>
    </location>
    <ligand>
        <name>Ca(2+)</name>
        <dbReference type="ChEBI" id="CHEBI:29108"/>
        <label>4</label>
    </ligand>
</feature>
<feature type="binding site" evidence="5">
    <location>
        <position position="639"/>
    </location>
    <ligand>
        <name>Ca(2+)</name>
        <dbReference type="ChEBI" id="CHEBI:29108"/>
        <label>4</label>
    </ligand>
</feature>
<feature type="site" description="Cleavage; for 78 kDa form" evidence="1">
    <location>
        <begin position="15"/>
        <end position="16"/>
    </location>
</feature>
<feature type="site" description="Cleavage; for 75 kDa form" evidence="1">
    <location>
        <begin position="27"/>
        <end position="28"/>
    </location>
</feature>
<feature type="modified residue" description="Phosphothreonine" evidence="2">
    <location>
        <position position="354"/>
    </location>
</feature>
<feature type="sequence conflict" description="In Ref. 3; AAA65125." evidence="6" ref="3">
    <original>V</original>
    <variation>I</variation>
    <location>
        <position position="528"/>
    </location>
</feature>
<feature type="sequence conflict" description="In Ref. 3; AAA65125." evidence="6" ref="3">
    <original>I</original>
    <variation>N</variation>
    <location>
        <position position="531"/>
    </location>
</feature>
<feature type="sequence conflict" description="In Ref. 3; AAA65125." evidence="6" ref="3">
    <original>E</original>
    <variation>G</variation>
    <location>
        <position position="541"/>
    </location>
</feature>
<feature type="sequence conflict" description="In Ref. 3; AAA65125." evidence="6" ref="3">
    <original>S</original>
    <variation>A</variation>
    <location>
        <position position="622"/>
    </location>
</feature>
<accession>P35750</accession>
<accession>Q29600</accession>
<accession>Q9N0M6</accession>
<gene>
    <name evidence="2" type="primary">CAPN1</name>
</gene>
<comment type="function">
    <text evidence="2">Calcium-regulated non-lysosomal thiol-protease which catalyzes limited proteolysis of substrates involved in cytoskeletal remodeling and signal transduction. Proteolytically cleaves CTBP1. Cleaves and activates caspase-7 (CASP7).</text>
</comment>
<comment type="catalytic activity">
    <reaction evidence="2">
        <text>Broad endopeptidase specificity.</text>
        <dbReference type="EC" id="3.4.22.52"/>
    </reaction>
</comment>
<comment type="cofactor">
    <cofactor evidence="2">
        <name>Ca(2+)</name>
        <dbReference type="ChEBI" id="CHEBI:29108"/>
    </cofactor>
    <text evidence="2">Binds 4 Ca(2+) ions.</text>
</comment>
<comment type="activity regulation">
    <text evidence="2">Activated by micromolar concentrations of calcium and inhibited by calpastatin.</text>
</comment>
<comment type="subunit">
    <text evidence="3">Forms a heterodimer with a small (regulatory) subunit CAPNS1.</text>
</comment>
<comment type="subcellular location">
    <subcellularLocation>
        <location evidence="2">Cytoplasm</location>
    </subcellularLocation>
    <subcellularLocation>
        <location evidence="2">Cell membrane</location>
    </subcellularLocation>
    <text evidence="2">Translocates to the plasma membrane upon Ca(2+) binding.</text>
</comment>
<comment type="PTM">
    <text evidence="2">Undergoes calcium-induced successive autoproteolytic cleavages that generate a membrane-bound 78 kDa active form and an intracellular 75 kDa active form. Calpastatin reduces with high efficiency the transition from 78 kDa to 75 kDa calpain forms (By similarity).</text>
</comment>
<comment type="similarity">
    <text evidence="6">Belongs to the peptidase C2 family.</text>
</comment>
<dbReference type="EC" id="3.4.22.52" evidence="2"/>
<dbReference type="EMBL" id="AF263610">
    <property type="protein sequence ID" value="AAF73444.1"/>
    <property type="molecule type" value="mRNA"/>
</dbReference>
<dbReference type="EMBL" id="F14611">
    <property type="protein sequence ID" value="CAA23154.1"/>
    <property type="molecule type" value="mRNA"/>
</dbReference>
<dbReference type="EMBL" id="U01180">
    <property type="protein sequence ID" value="AAA65125.1"/>
    <property type="molecule type" value="mRNA"/>
</dbReference>
<dbReference type="RefSeq" id="NP_001335713.1">
    <property type="nucleotide sequence ID" value="NM_001348784.2"/>
</dbReference>
<dbReference type="RefSeq" id="XP_005660759.1">
    <property type="nucleotide sequence ID" value="XM_005660702.3"/>
</dbReference>
<dbReference type="SMR" id="P35750"/>
<dbReference type="FunCoup" id="P35750">
    <property type="interactions" value="1039"/>
</dbReference>
<dbReference type="STRING" id="9823.ENSSSCP00000013824"/>
<dbReference type="BindingDB" id="P35750"/>
<dbReference type="ChEMBL" id="CHEMBL4062"/>
<dbReference type="MEROPS" id="C02.001"/>
<dbReference type="PaxDb" id="9823-ENSSSCP00000013824"/>
<dbReference type="PeptideAtlas" id="P35750"/>
<dbReference type="Ensembl" id="ENSSSCT00030023973.1">
    <property type="protein sequence ID" value="ENSSSCP00030010752.1"/>
    <property type="gene ID" value="ENSSSCG00030017341.1"/>
</dbReference>
<dbReference type="Ensembl" id="ENSSSCT00030023978.1">
    <property type="protein sequence ID" value="ENSSSCP00030010754.1"/>
    <property type="gene ID" value="ENSSSCG00030017341.1"/>
</dbReference>
<dbReference type="Ensembl" id="ENSSSCT00035095488.1">
    <property type="protein sequence ID" value="ENSSSCP00035040163.1"/>
    <property type="gene ID" value="ENSSSCG00035069457.1"/>
</dbReference>
<dbReference type="Ensembl" id="ENSSSCT00045028973.1">
    <property type="protein sequence ID" value="ENSSSCP00045020058.1"/>
    <property type="gene ID" value="ENSSSCG00045016673.1"/>
</dbReference>
<dbReference type="Ensembl" id="ENSSSCT00055045028.1">
    <property type="protein sequence ID" value="ENSSSCP00055035871.1"/>
    <property type="gene ID" value="ENSSSCG00055022554.1"/>
</dbReference>
<dbReference type="Ensembl" id="ENSSSCT00060079788.1">
    <property type="protein sequence ID" value="ENSSSCP00060034533.1"/>
    <property type="gene ID" value="ENSSSCG00060058087.1"/>
</dbReference>
<dbReference type="Ensembl" id="ENSSSCT00060079791.1">
    <property type="protein sequence ID" value="ENSSSCP00060034536.1"/>
    <property type="gene ID" value="ENSSSCG00060058087.1"/>
</dbReference>
<dbReference type="Ensembl" id="ENSSSCT00065043021.1">
    <property type="protein sequence ID" value="ENSSSCP00065018268.1"/>
    <property type="gene ID" value="ENSSSCG00065031759.1"/>
</dbReference>
<dbReference type="Ensembl" id="ENSSSCT00070040541.1">
    <property type="protein sequence ID" value="ENSSSCP00070034011.1"/>
    <property type="gene ID" value="ENSSSCG00070020405.1"/>
</dbReference>
<dbReference type="Ensembl" id="ENSSSCT00115039271">
    <property type="protein sequence ID" value="ENSSSCP00115037036"/>
    <property type="gene ID" value="ENSSSCG00115022178"/>
</dbReference>
<dbReference type="GeneID" id="397027"/>
<dbReference type="KEGG" id="ssc:397027"/>
<dbReference type="CTD" id="823"/>
<dbReference type="eggNOG" id="KOG0045">
    <property type="taxonomic scope" value="Eukaryota"/>
</dbReference>
<dbReference type="HOGENOM" id="CLU_010982_0_1_1"/>
<dbReference type="InParanoid" id="P35750"/>
<dbReference type="OMA" id="NSKEWNG"/>
<dbReference type="OrthoDB" id="424753at2759"/>
<dbReference type="TreeFam" id="TF314748"/>
<dbReference type="BRENDA" id="3.4.22.52">
    <property type="organism ID" value="6170"/>
</dbReference>
<dbReference type="Reactome" id="R-SSC-1474228">
    <property type="pathway name" value="Degradation of the extracellular matrix"/>
</dbReference>
<dbReference type="Reactome" id="R-SSC-6798695">
    <property type="pathway name" value="Neutrophil degranulation"/>
</dbReference>
<dbReference type="PRO" id="PR:P35750"/>
<dbReference type="Proteomes" id="UP000008227">
    <property type="component" value="Unplaced"/>
</dbReference>
<dbReference type="Proteomes" id="UP000314985">
    <property type="component" value="Chromosome 2"/>
</dbReference>
<dbReference type="Proteomes" id="UP000694570">
    <property type="component" value="Unplaced"/>
</dbReference>
<dbReference type="Proteomes" id="UP000694571">
    <property type="component" value="Unplaced"/>
</dbReference>
<dbReference type="Proteomes" id="UP000694720">
    <property type="component" value="Unplaced"/>
</dbReference>
<dbReference type="Proteomes" id="UP000694722">
    <property type="component" value="Unplaced"/>
</dbReference>
<dbReference type="Proteomes" id="UP000694723">
    <property type="component" value="Unplaced"/>
</dbReference>
<dbReference type="Proteomes" id="UP000694724">
    <property type="component" value="Unplaced"/>
</dbReference>
<dbReference type="Proteomes" id="UP000694725">
    <property type="component" value="Unplaced"/>
</dbReference>
<dbReference type="Proteomes" id="UP000694726">
    <property type="component" value="Unplaced"/>
</dbReference>
<dbReference type="Proteomes" id="UP000694727">
    <property type="component" value="Unplaced"/>
</dbReference>
<dbReference type="Proteomes" id="UP000694728">
    <property type="component" value="Unplaced"/>
</dbReference>
<dbReference type="Bgee" id="ENSSSCG00000012999">
    <property type="expression patterns" value="Expressed in blood and 43 other cell types or tissues"/>
</dbReference>
<dbReference type="ExpressionAtlas" id="P35750">
    <property type="expression patterns" value="baseline and differential"/>
</dbReference>
<dbReference type="GO" id="GO:0005737">
    <property type="term" value="C:cytoplasm"/>
    <property type="evidence" value="ECO:0000314"/>
    <property type="project" value="CAFA"/>
</dbReference>
<dbReference type="GO" id="GO:0005829">
    <property type="term" value="C:cytosol"/>
    <property type="evidence" value="ECO:0000250"/>
    <property type="project" value="UniProtKB"/>
</dbReference>
<dbReference type="GO" id="GO:0005886">
    <property type="term" value="C:plasma membrane"/>
    <property type="evidence" value="ECO:0000250"/>
    <property type="project" value="UniProtKB"/>
</dbReference>
<dbReference type="GO" id="GO:0005509">
    <property type="term" value="F:calcium ion binding"/>
    <property type="evidence" value="ECO:0000250"/>
    <property type="project" value="UniProtKB"/>
</dbReference>
<dbReference type="GO" id="GO:0004198">
    <property type="term" value="F:calcium-dependent cysteine-type endopeptidase activity"/>
    <property type="evidence" value="ECO:0000314"/>
    <property type="project" value="CAFA"/>
</dbReference>
<dbReference type="GO" id="GO:0006508">
    <property type="term" value="P:proteolysis"/>
    <property type="evidence" value="ECO:0000314"/>
    <property type="project" value="CAFA"/>
</dbReference>
<dbReference type="GO" id="GO:0050790">
    <property type="term" value="P:regulation of catalytic activity"/>
    <property type="evidence" value="ECO:0000250"/>
    <property type="project" value="UniProtKB"/>
</dbReference>
<dbReference type="GO" id="GO:0097264">
    <property type="term" value="P:self proteolysis"/>
    <property type="evidence" value="ECO:0000250"/>
    <property type="project" value="UniProtKB"/>
</dbReference>
<dbReference type="CDD" id="cd00214">
    <property type="entry name" value="Calpain_III"/>
    <property type="match status" value="1"/>
</dbReference>
<dbReference type="CDD" id="cd00044">
    <property type="entry name" value="CysPc"/>
    <property type="match status" value="1"/>
</dbReference>
<dbReference type="CDD" id="cd16198">
    <property type="entry name" value="EFh_PEF_CAPN1"/>
    <property type="match status" value="1"/>
</dbReference>
<dbReference type="FunFam" id="1.10.238.10:FF:000124">
    <property type="entry name" value="Calpain-1 catalytic subunit"/>
    <property type="match status" value="1"/>
</dbReference>
<dbReference type="FunFam" id="2.60.120.380:FF:000001">
    <property type="entry name" value="Calpain-1 catalytic subunit"/>
    <property type="match status" value="1"/>
</dbReference>
<dbReference type="FunFam" id="3.90.70.10:FF:000001">
    <property type="entry name" value="Calpain-1 catalytic subunit"/>
    <property type="match status" value="1"/>
</dbReference>
<dbReference type="Gene3D" id="2.60.120.380">
    <property type="match status" value="1"/>
</dbReference>
<dbReference type="Gene3D" id="3.90.70.10">
    <property type="entry name" value="Cysteine proteinases"/>
    <property type="match status" value="1"/>
</dbReference>
<dbReference type="Gene3D" id="1.10.238.10">
    <property type="entry name" value="EF-hand"/>
    <property type="match status" value="1"/>
</dbReference>
<dbReference type="InterPro" id="IPR033883">
    <property type="entry name" value="C2_III"/>
</dbReference>
<dbReference type="InterPro" id="IPR022684">
    <property type="entry name" value="Calpain_cysteine_protease"/>
</dbReference>
<dbReference type="InterPro" id="IPR022682">
    <property type="entry name" value="Calpain_domain_III"/>
</dbReference>
<dbReference type="InterPro" id="IPR022683">
    <property type="entry name" value="Calpain_III"/>
</dbReference>
<dbReference type="InterPro" id="IPR036213">
    <property type="entry name" value="Calpain_III_sf"/>
</dbReference>
<dbReference type="InterPro" id="IPR011992">
    <property type="entry name" value="EF-hand-dom_pair"/>
</dbReference>
<dbReference type="InterPro" id="IPR018247">
    <property type="entry name" value="EF_Hand_1_Ca_BS"/>
</dbReference>
<dbReference type="InterPro" id="IPR002048">
    <property type="entry name" value="EF_hand_dom"/>
</dbReference>
<dbReference type="InterPro" id="IPR038765">
    <property type="entry name" value="Papain-like_cys_pep_sf"/>
</dbReference>
<dbReference type="InterPro" id="IPR000169">
    <property type="entry name" value="Pept_cys_AS"/>
</dbReference>
<dbReference type="InterPro" id="IPR001300">
    <property type="entry name" value="Peptidase_C2_calpain_cat"/>
</dbReference>
<dbReference type="PANTHER" id="PTHR10183">
    <property type="entry name" value="CALPAIN"/>
    <property type="match status" value="1"/>
</dbReference>
<dbReference type="PANTHER" id="PTHR10183:SF284">
    <property type="entry name" value="CALPAIN-1 CATALYTIC SUBUNIT"/>
    <property type="match status" value="1"/>
</dbReference>
<dbReference type="Pfam" id="PF01067">
    <property type="entry name" value="Calpain_III"/>
    <property type="match status" value="1"/>
</dbReference>
<dbReference type="Pfam" id="PF13833">
    <property type="entry name" value="EF-hand_8"/>
    <property type="match status" value="1"/>
</dbReference>
<dbReference type="Pfam" id="PF00648">
    <property type="entry name" value="Peptidase_C2"/>
    <property type="match status" value="1"/>
</dbReference>
<dbReference type="PRINTS" id="PR00704">
    <property type="entry name" value="CALPAIN"/>
</dbReference>
<dbReference type="SMART" id="SM00720">
    <property type="entry name" value="calpain_III"/>
    <property type="match status" value="1"/>
</dbReference>
<dbReference type="SMART" id="SM00230">
    <property type="entry name" value="CysPc"/>
    <property type="match status" value="1"/>
</dbReference>
<dbReference type="SUPFAM" id="SSF49758">
    <property type="entry name" value="Calpain large subunit, middle domain (domain III)"/>
    <property type="match status" value="1"/>
</dbReference>
<dbReference type="SUPFAM" id="SSF54001">
    <property type="entry name" value="Cysteine proteinases"/>
    <property type="match status" value="1"/>
</dbReference>
<dbReference type="SUPFAM" id="SSF47473">
    <property type="entry name" value="EF-hand"/>
    <property type="match status" value="1"/>
</dbReference>
<dbReference type="PROSITE" id="PS50203">
    <property type="entry name" value="CALPAIN_CAT"/>
    <property type="match status" value="1"/>
</dbReference>
<dbReference type="PROSITE" id="PS00018">
    <property type="entry name" value="EF_HAND_1"/>
    <property type="match status" value="2"/>
</dbReference>
<dbReference type="PROSITE" id="PS50222">
    <property type="entry name" value="EF_HAND_2"/>
    <property type="match status" value="3"/>
</dbReference>
<dbReference type="PROSITE" id="PS00139">
    <property type="entry name" value="THIOL_PROTEASE_CYS"/>
    <property type="match status" value="1"/>
</dbReference>
<keyword id="KW-0068">Autocatalytic cleavage</keyword>
<keyword id="KW-0106">Calcium</keyword>
<keyword id="KW-1003">Cell membrane</keyword>
<keyword id="KW-0963">Cytoplasm</keyword>
<keyword id="KW-0378">Hydrolase</keyword>
<keyword id="KW-0472">Membrane</keyword>
<keyword id="KW-0479">Metal-binding</keyword>
<keyword id="KW-0597">Phosphoprotein</keyword>
<keyword id="KW-0645">Protease</keyword>
<keyword id="KW-1185">Reference proteome</keyword>
<keyword id="KW-0677">Repeat</keyword>
<keyword id="KW-0788">Thiol protease</keyword>
<proteinExistence type="evidence at transcript level"/>
<reference key="1">
    <citation type="journal article" date="2001" name="J. Anim. Sci.">
        <title>Rapid communication: nucleotide sequences of two isoforms of porcine micromolar calcium-activated neutral protease 1 cDNA.</title>
        <authorList>
            <person name="Smith T.P.L."/>
            <person name="Simmen F.A."/>
            <person name="Zhao G."/>
            <person name="Vallet J.L."/>
        </authorList>
    </citation>
    <scope>NUCLEOTIDE SEQUENCE [MRNA]</scope>
</reference>
<reference key="2">
    <citation type="journal article" date="1996" name="Mamm. Genome">
        <title>Evaluation and characterization of a porcine small intestine cDNA library: analysis of 839 clones.</title>
        <authorList>
            <person name="Winteroe A.K."/>
            <person name="Fredholm M."/>
            <person name="Davies W."/>
        </authorList>
    </citation>
    <scope>NUCLEOTIDE SEQUENCE [LARGE SCALE MRNA] OF 326-415</scope>
    <source>
        <tissue>Small intestine</tissue>
    </source>
</reference>
<reference key="3">
    <citation type="journal article" date="1993" name="Biochimie">
        <title>Cloning the partial cDNAs of mu-calpain and m-calpain from porcine skeletal muscle.</title>
        <authorList>
            <person name="Sun W."/>
            <person name="Ji S.Q."/>
            <person name="Ebert P.J."/>
            <person name="Bidwell C.A."/>
            <person name="Hancock D.L."/>
        </authorList>
    </citation>
    <scope>NUCLEOTIDE SEQUENCE [MRNA] OF 528-623</scope>
    <source>
        <tissue>Skeletal muscle</tissue>
    </source>
</reference>